<keyword id="KW-0046">Antibiotic resistance</keyword>
<keyword id="KW-0489">Methyltransferase</keyword>
<keyword id="KW-0694">RNA-binding</keyword>
<keyword id="KW-0949">S-adenosyl-L-methionine</keyword>
<keyword id="KW-0808">Transferase</keyword>
<organism>
    <name type="scientific">Bacillus licheniformis</name>
    <dbReference type="NCBI Taxonomy" id="1402"/>
    <lineage>
        <taxon>Bacteria</taxon>
        <taxon>Bacillati</taxon>
        <taxon>Bacillota</taxon>
        <taxon>Bacilli</taxon>
        <taxon>Bacillales</taxon>
        <taxon>Bacillaceae</taxon>
        <taxon>Bacillus</taxon>
    </lineage>
</organism>
<accession>Q03986</accession>
<evidence type="ECO:0000255" key="1">
    <source>
        <dbReference type="PROSITE-ProRule" id="PRU01026"/>
    </source>
</evidence>
<evidence type="ECO:0000256" key="2">
    <source>
        <dbReference type="SAM" id="MobiDB-lite"/>
    </source>
</evidence>
<sequence>MKKKNHKYRGKKLNRGESPNFSGQHLMHNKKLIEEIVDRANISIDDTVLELGAGKGALTTVLSQKAGKVLAVENDSKFVDILTRKTAQHSNTKIIHQDIMKIHLPKEKFVVVSNIPYAITTPIMKMLLNNPASGFQKGIIVMEKGAAKRFTSKFIKNSYVLAWRMWFDIGIVREISKEHFSPPPKVDSAMVRITRKKDAPLSHKHYIAFRGLAEYALKEPNIPLCVALRGIFTPRQMKHLRKSLKINNEKTVGTLTENQWAVIFNTMTQYVMHHKWPRANKRKPGEI</sequence>
<feature type="chain" id="PRO_0000101669" description="rRNA adenine N-6-methyltransferase">
    <location>
        <begin position="1"/>
        <end position="287"/>
    </location>
</feature>
<feature type="region of interest" description="Disordered" evidence="2">
    <location>
        <begin position="1"/>
        <end position="21"/>
    </location>
</feature>
<feature type="compositionally biased region" description="Basic residues" evidence="2">
    <location>
        <begin position="1"/>
        <end position="13"/>
    </location>
</feature>
<feature type="binding site" evidence="1">
    <location>
        <position position="25"/>
    </location>
    <ligand>
        <name>S-adenosyl-L-methionine</name>
        <dbReference type="ChEBI" id="CHEBI:59789"/>
    </ligand>
</feature>
<feature type="binding site" evidence="1">
    <location>
        <position position="27"/>
    </location>
    <ligand>
        <name>S-adenosyl-L-methionine</name>
        <dbReference type="ChEBI" id="CHEBI:59789"/>
    </ligand>
</feature>
<feature type="binding site" evidence="1">
    <location>
        <position position="52"/>
    </location>
    <ligand>
        <name>S-adenosyl-L-methionine</name>
        <dbReference type="ChEBI" id="CHEBI:59789"/>
    </ligand>
</feature>
<feature type="binding site" evidence="1">
    <location>
        <position position="73"/>
    </location>
    <ligand>
        <name>S-adenosyl-L-methionine</name>
        <dbReference type="ChEBI" id="CHEBI:59789"/>
    </ligand>
</feature>
<feature type="binding site" evidence="1">
    <location>
        <position position="98"/>
    </location>
    <ligand>
        <name>S-adenosyl-L-methionine</name>
        <dbReference type="ChEBI" id="CHEBI:59789"/>
    </ligand>
</feature>
<feature type="binding site" evidence="1">
    <location>
        <position position="114"/>
    </location>
    <ligand>
        <name>S-adenosyl-L-methionine</name>
        <dbReference type="ChEBI" id="CHEBI:59789"/>
    </ligand>
</feature>
<gene>
    <name type="primary">ermD</name>
</gene>
<protein>
    <recommendedName>
        <fullName>rRNA adenine N-6-methyltransferase</fullName>
        <ecNumber evidence="1">2.1.1.-</ecNumber>
    </recommendedName>
    <alternativeName>
        <fullName>Erythromycin resistance protein</fullName>
    </alternativeName>
    <alternativeName>
        <fullName>Macrolide-lincosamide-streptogramin B resistance protein</fullName>
    </alternativeName>
</protein>
<proteinExistence type="evidence at transcript level"/>
<dbReference type="EC" id="2.1.1.-" evidence="1"/>
<dbReference type="EMBL" id="M29832">
    <property type="protein sequence ID" value="AAA22599.1"/>
    <property type="molecule type" value="Genomic_DNA"/>
</dbReference>
<dbReference type="PIR" id="I39885">
    <property type="entry name" value="I39885"/>
</dbReference>
<dbReference type="RefSeq" id="WP_025811090.1">
    <property type="nucleotide sequence ID" value="NG_047820.1"/>
</dbReference>
<dbReference type="SMR" id="Q03986"/>
<dbReference type="KEGG" id="ag:AAA22599"/>
<dbReference type="PATRIC" id="fig|1402.64.peg.241"/>
<dbReference type="GO" id="GO:0003723">
    <property type="term" value="F:RNA binding"/>
    <property type="evidence" value="ECO:0007669"/>
    <property type="project" value="UniProtKB-KW"/>
</dbReference>
<dbReference type="GO" id="GO:0000179">
    <property type="term" value="F:rRNA (adenine-N6,N6-)-dimethyltransferase activity"/>
    <property type="evidence" value="ECO:0007669"/>
    <property type="project" value="InterPro"/>
</dbReference>
<dbReference type="GO" id="GO:0046677">
    <property type="term" value="P:response to antibiotic"/>
    <property type="evidence" value="ECO:0007669"/>
    <property type="project" value="UniProtKB-KW"/>
</dbReference>
<dbReference type="CDD" id="cd02440">
    <property type="entry name" value="AdoMet_MTases"/>
    <property type="match status" value="1"/>
</dbReference>
<dbReference type="Gene3D" id="1.10.8.100">
    <property type="entry name" value="Ribosomal RNA adenine dimethylase-like, domain 2"/>
    <property type="match status" value="1"/>
</dbReference>
<dbReference type="Gene3D" id="3.40.50.150">
    <property type="entry name" value="Vaccinia Virus protein VP39"/>
    <property type="match status" value="1"/>
</dbReference>
<dbReference type="InterPro" id="IPR001737">
    <property type="entry name" value="KsgA/Erm"/>
</dbReference>
<dbReference type="InterPro" id="IPR023165">
    <property type="entry name" value="rRNA_Ade_diMease-like_C"/>
</dbReference>
<dbReference type="InterPro" id="IPR020596">
    <property type="entry name" value="rRNA_Ade_Mease_Trfase_CS"/>
</dbReference>
<dbReference type="InterPro" id="IPR020598">
    <property type="entry name" value="rRNA_Ade_methylase_Trfase_N"/>
</dbReference>
<dbReference type="InterPro" id="IPR029063">
    <property type="entry name" value="SAM-dependent_MTases_sf"/>
</dbReference>
<dbReference type="NCBIfam" id="NF000499">
    <property type="entry name" value="Erm23S_rRNA_broad"/>
    <property type="match status" value="1"/>
</dbReference>
<dbReference type="PANTHER" id="PTHR11727">
    <property type="entry name" value="DIMETHYLADENOSINE TRANSFERASE"/>
    <property type="match status" value="1"/>
</dbReference>
<dbReference type="PANTHER" id="PTHR11727:SF7">
    <property type="entry name" value="DIMETHYLADENOSINE TRANSFERASE-RELATED"/>
    <property type="match status" value="1"/>
</dbReference>
<dbReference type="Pfam" id="PF00398">
    <property type="entry name" value="RrnaAD"/>
    <property type="match status" value="1"/>
</dbReference>
<dbReference type="SMART" id="SM00650">
    <property type="entry name" value="rADc"/>
    <property type="match status" value="1"/>
</dbReference>
<dbReference type="SUPFAM" id="SSF53335">
    <property type="entry name" value="S-adenosyl-L-methionine-dependent methyltransferases"/>
    <property type="match status" value="1"/>
</dbReference>
<dbReference type="PROSITE" id="PS01131">
    <property type="entry name" value="RRNA_A_DIMETH"/>
    <property type="match status" value="1"/>
</dbReference>
<dbReference type="PROSITE" id="PS51689">
    <property type="entry name" value="SAM_RNA_A_N6_MT"/>
    <property type="match status" value="1"/>
</dbReference>
<name>ERMD_BACLI</name>
<comment type="function">
    <text>Involved in erythromycin resistance.</text>
</comment>
<comment type="induction">
    <text>By erythromycin and oleandomycin.</text>
</comment>
<comment type="similarity">
    <text evidence="1">Belongs to the class I-like SAM-binding methyltransferase superfamily. rRNA adenine N(6)-methyltransferase family.</text>
</comment>
<reference key="1">
    <citation type="journal article" date="1984" name="Mol. Gen. Genet.">
        <title>DNA sequence and regulation of ermD, a macrolide-lincosamide-streptogramin B resistance element from Bacillus licheniformis.</title>
        <authorList>
            <person name="Gryczan T."/>
            <person name="Israeli-Reches M."/>
            <person name="del Bue M."/>
            <person name="Dubnau D."/>
        </authorList>
    </citation>
    <scope>NUCLEOTIDE SEQUENCE [GENOMIC DNA]</scope>
</reference>